<dbReference type="EC" id="1.5.1.38" evidence="1"/>
<dbReference type="EMBL" id="X73124">
    <property type="protein sequence ID" value="CAA51599.1"/>
    <property type="molecule type" value="Genomic_DNA"/>
</dbReference>
<dbReference type="EMBL" id="AL009126">
    <property type="protein sequence ID" value="CAB15837.1"/>
    <property type="molecule type" value="Genomic_DNA"/>
</dbReference>
<dbReference type="PIR" id="S39698">
    <property type="entry name" value="S39698"/>
</dbReference>
<dbReference type="PDB" id="3N2S">
    <property type="method" value="X-ray"/>
    <property type="resolution" value="1.95 A"/>
    <property type="chains" value="A/B/C/D=1-249"/>
</dbReference>
<dbReference type="PDBsum" id="3N2S"/>
<dbReference type="SMR" id="P39605"/>
<dbReference type="FunCoup" id="P39605">
    <property type="interactions" value="49"/>
</dbReference>
<dbReference type="MINT" id="P39605"/>
<dbReference type="STRING" id="224308.BSU38110"/>
<dbReference type="jPOST" id="P39605"/>
<dbReference type="PaxDb" id="224308-BSU38110"/>
<dbReference type="EnsemblBacteria" id="CAB15837">
    <property type="protein sequence ID" value="CAB15837"/>
    <property type="gene ID" value="BSU_38110"/>
</dbReference>
<dbReference type="GeneID" id="937279"/>
<dbReference type="KEGG" id="bsu:BSU38110"/>
<dbReference type="PATRIC" id="fig|224308.179.peg.4125"/>
<dbReference type="eggNOG" id="COG0778">
    <property type="taxonomic scope" value="Bacteria"/>
</dbReference>
<dbReference type="InParanoid" id="P39605"/>
<dbReference type="OrthoDB" id="9775805at2"/>
<dbReference type="PhylomeDB" id="P39605"/>
<dbReference type="BioCyc" id="BSUB:BSU38110-MONOMER"/>
<dbReference type="SABIO-RK" id="P39605"/>
<dbReference type="EvolutionaryTrace" id="P39605"/>
<dbReference type="Proteomes" id="UP000001570">
    <property type="component" value="Chromosome"/>
</dbReference>
<dbReference type="GO" id="GO:0052873">
    <property type="term" value="F:FMN reductase (NADPH) activity"/>
    <property type="evidence" value="ECO:0007669"/>
    <property type="project" value="UniProtKB-EC"/>
</dbReference>
<dbReference type="CDD" id="cd02146">
    <property type="entry name" value="NfsA-like"/>
    <property type="match status" value="1"/>
</dbReference>
<dbReference type="Gene3D" id="3.40.109.10">
    <property type="entry name" value="NADH Oxidase"/>
    <property type="match status" value="1"/>
</dbReference>
<dbReference type="InterPro" id="IPR016446">
    <property type="entry name" value="Flavin_OxRdtase_Frp"/>
</dbReference>
<dbReference type="InterPro" id="IPR029479">
    <property type="entry name" value="Nitroreductase"/>
</dbReference>
<dbReference type="InterPro" id="IPR000415">
    <property type="entry name" value="Nitroreductase-like"/>
</dbReference>
<dbReference type="NCBIfam" id="NF008033">
    <property type="entry name" value="PRK10765.1"/>
    <property type="match status" value="1"/>
</dbReference>
<dbReference type="PANTHER" id="PTHR43425:SF3">
    <property type="entry name" value="NADPH-DEPENDENT OXIDOREDUCTASE"/>
    <property type="match status" value="1"/>
</dbReference>
<dbReference type="PANTHER" id="PTHR43425">
    <property type="entry name" value="OXYGEN-INSENSITIVE NADPH NITROREDUCTASE"/>
    <property type="match status" value="1"/>
</dbReference>
<dbReference type="Pfam" id="PF00881">
    <property type="entry name" value="Nitroreductase"/>
    <property type="match status" value="1"/>
</dbReference>
<dbReference type="PIRSF" id="PIRSF005426">
    <property type="entry name" value="Frp"/>
    <property type="match status" value="1"/>
</dbReference>
<dbReference type="SUPFAM" id="SSF55469">
    <property type="entry name" value="FMN-dependent nitroreductase-like"/>
    <property type="match status" value="1"/>
</dbReference>
<evidence type="ECO:0000269" key="1">
    <source>
    </source>
</evidence>
<evidence type="ECO:0000305" key="2"/>
<evidence type="ECO:0000305" key="3">
    <source>
    </source>
</evidence>
<evidence type="ECO:0007829" key="4">
    <source>
        <dbReference type="PDB" id="3N2S"/>
    </source>
</evidence>
<accession>P39605</accession>
<name>NFRA1_BACSU</name>
<keyword id="KW-0002">3D-structure</keyword>
<keyword id="KW-0285">Flavoprotein</keyword>
<keyword id="KW-0288">FMN</keyword>
<keyword id="KW-0521">NADP</keyword>
<keyword id="KW-0560">Oxidoreductase</keyword>
<keyword id="KW-1185">Reference proteome</keyword>
<gene>
    <name type="primary">nfrA1</name>
    <name type="synonym">nfrA</name>
    <name type="synonym">ywcG</name>
    <name type="ordered locus">BSU38110</name>
    <name type="ORF">ipa-43d</name>
</gene>
<sequence length="249" mass="28320">MNNTIETILNHRSIRSFTDQLLTAEEIDTLVKSAQAASTSSYVQAYSIIGVSDPEKKRELSVLAGNQPYVEKNGHFFVFCADLYRHQQLAEEKGEHISELLENTEMFMVSLIDAALAAQNMSIAAESMGLGICYIGGIRNELDKVTEVLQTPDHVLPLFGLAVGHPANLSGKKPRLPKQAVYHENTYNVNTDDFRHTMNTYDKTISDYYRERTNGKREETWSDQILNFMKQKPRTYLNDYVKEKGFNKN</sequence>
<organism>
    <name type="scientific">Bacillus subtilis (strain 168)</name>
    <dbReference type="NCBI Taxonomy" id="224308"/>
    <lineage>
        <taxon>Bacteria</taxon>
        <taxon>Bacillati</taxon>
        <taxon>Bacillota</taxon>
        <taxon>Bacilli</taxon>
        <taxon>Bacillales</taxon>
        <taxon>Bacillaceae</taxon>
        <taxon>Bacillus</taxon>
    </lineage>
</organism>
<comment type="function">
    <text evidence="1">Reduces FMNH(2) to FMN, with NADPH as reductant. It also reduces nitroaromatic compounds, quinones and azo dyes.</text>
</comment>
<comment type="catalytic activity">
    <reaction evidence="1">
        <text>FMNH2 + NADP(+) = FMN + NADPH + 2 H(+)</text>
        <dbReference type="Rhea" id="RHEA:21624"/>
        <dbReference type="ChEBI" id="CHEBI:15378"/>
        <dbReference type="ChEBI" id="CHEBI:57618"/>
        <dbReference type="ChEBI" id="CHEBI:57783"/>
        <dbReference type="ChEBI" id="CHEBI:58210"/>
        <dbReference type="ChEBI" id="CHEBI:58349"/>
        <dbReference type="EC" id="1.5.1.38"/>
    </reaction>
</comment>
<comment type="biophysicochemical properties">
    <kinetics>
        <KM evidence="1">0.85 uM for NADPH (with nitrofurazone at pH 7 and at 23 degrees Celsius)</KM>
        <KM evidence="1">3.9 uM for NADPH (with FMN at pH 7 and at 23 degrees Celsius)</KM>
        <KM evidence="1">4.7 uM for FMN (with NADPH at pH 7 and at 23 degrees Celsius)</KM>
        <KM evidence="1">16.3 uM for nitrofurazone (with NADPH at pH 7 and at 23 degrees Celsius)</KM>
        <Vmax evidence="1">9.0 umol/min/mg enzyme with FMN as substrate (with NADPH at pH 7 and at 23 degrees Celsius)</Vmax>
        <Vmax evidence="1">97.0 umol/min/mg enzyme with nitrofurazone as substrate (with NADPH at pH 7 and at 23 degrees Celsius)</Vmax>
    </kinetics>
</comment>
<comment type="subunit">
    <text evidence="3">Homodimer.</text>
</comment>
<comment type="miscellaneous">
    <text>Catalysis proceeds by a classical ping-pong bi-bi reaction mechanism. NADPH is more effective as an electron donor than NADH.</text>
</comment>
<comment type="similarity">
    <text evidence="2">Belongs to the flavin oxidoreductase frp family.</text>
</comment>
<protein>
    <recommendedName>
        <fullName>FMN reductase (NADPH)</fullName>
        <ecNumber evidence="1">1.5.1.38</ecNumber>
    </recommendedName>
    <alternativeName>
        <fullName>NADPH-dependent FMN reductase</fullName>
    </alternativeName>
    <alternativeName>
        <fullName>NADPH-dependent nitro/flavin reductase</fullName>
    </alternativeName>
    <alternativeName>
        <fullName>NADPH-dependent nitroreductase</fullName>
    </alternativeName>
    <alternativeName>
        <fullName>NADPH-dependent oxidoreductase</fullName>
    </alternativeName>
</protein>
<reference key="1">
    <citation type="journal article" date="1993" name="Mol. Microbiol.">
        <title>Bacillus subtilis genome project: cloning and sequencing of the 97 kb region from 325 degrees to 333 degrees.</title>
        <authorList>
            <person name="Glaser P."/>
            <person name="Kunst F."/>
            <person name="Arnaud M."/>
            <person name="Coudart M.P."/>
            <person name="Gonzales W."/>
            <person name="Hullo M.-F."/>
            <person name="Ionescu M."/>
            <person name="Lubochinsky B."/>
            <person name="Marcelino L."/>
            <person name="Moszer I."/>
            <person name="Presecan E."/>
            <person name="Santana M."/>
            <person name="Schneider E."/>
            <person name="Schweizer J."/>
            <person name="Vertes A."/>
            <person name="Rapoport G."/>
            <person name="Danchin A."/>
        </authorList>
    </citation>
    <scope>NUCLEOTIDE SEQUENCE [GENOMIC DNA]</scope>
    <source>
        <strain>168</strain>
    </source>
</reference>
<reference key="2">
    <citation type="journal article" date="1997" name="Nature">
        <title>The complete genome sequence of the Gram-positive bacterium Bacillus subtilis.</title>
        <authorList>
            <person name="Kunst F."/>
            <person name="Ogasawara N."/>
            <person name="Moszer I."/>
            <person name="Albertini A.M."/>
            <person name="Alloni G."/>
            <person name="Azevedo V."/>
            <person name="Bertero M.G."/>
            <person name="Bessieres P."/>
            <person name="Bolotin A."/>
            <person name="Borchert S."/>
            <person name="Borriss R."/>
            <person name="Boursier L."/>
            <person name="Brans A."/>
            <person name="Braun M."/>
            <person name="Brignell S.C."/>
            <person name="Bron S."/>
            <person name="Brouillet S."/>
            <person name="Bruschi C.V."/>
            <person name="Caldwell B."/>
            <person name="Capuano V."/>
            <person name="Carter N.M."/>
            <person name="Choi S.-K."/>
            <person name="Codani J.-J."/>
            <person name="Connerton I.F."/>
            <person name="Cummings N.J."/>
            <person name="Daniel R.A."/>
            <person name="Denizot F."/>
            <person name="Devine K.M."/>
            <person name="Duesterhoeft A."/>
            <person name="Ehrlich S.D."/>
            <person name="Emmerson P.T."/>
            <person name="Entian K.-D."/>
            <person name="Errington J."/>
            <person name="Fabret C."/>
            <person name="Ferrari E."/>
            <person name="Foulger D."/>
            <person name="Fritz C."/>
            <person name="Fujita M."/>
            <person name="Fujita Y."/>
            <person name="Fuma S."/>
            <person name="Galizzi A."/>
            <person name="Galleron N."/>
            <person name="Ghim S.-Y."/>
            <person name="Glaser P."/>
            <person name="Goffeau A."/>
            <person name="Golightly E.J."/>
            <person name="Grandi G."/>
            <person name="Guiseppi G."/>
            <person name="Guy B.J."/>
            <person name="Haga K."/>
            <person name="Haiech J."/>
            <person name="Harwood C.R."/>
            <person name="Henaut A."/>
            <person name="Hilbert H."/>
            <person name="Holsappel S."/>
            <person name="Hosono S."/>
            <person name="Hullo M.-F."/>
            <person name="Itaya M."/>
            <person name="Jones L.-M."/>
            <person name="Joris B."/>
            <person name="Karamata D."/>
            <person name="Kasahara Y."/>
            <person name="Klaerr-Blanchard M."/>
            <person name="Klein C."/>
            <person name="Kobayashi Y."/>
            <person name="Koetter P."/>
            <person name="Koningstein G."/>
            <person name="Krogh S."/>
            <person name="Kumano M."/>
            <person name="Kurita K."/>
            <person name="Lapidus A."/>
            <person name="Lardinois S."/>
            <person name="Lauber J."/>
            <person name="Lazarevic V."/>
            <person name="Lee S.-M."/>
            <person name="Levine A."/>
            <person name="Liu H."/>
            <person name="Masuda S."/>
            <person name="Mauel C."/>
            <person name="Medigue C."/>
            <person name="Medina N."/>
            <person name="Mellado R.P."/>
            <person name="Mizuno M."/>
            <person name="Moestl D."/>
            <person name="Nakai S."/>
            <person name="Noback M."/>
            <person name="Noone D."/>
            <person name="O'Reilly M."/>
            <person name="Ogawa K."/>
            <person name="Ogiwara A."/>
            <person name="Oudega B."/>
            <person name="Park S.-H."/>
            <person name="Parro V."/>
            <person name="Pohl T.M."/>
            <person name="Portetelle D."/>
            <person name="Porwollik S."/>
            <person name="Prescott A.M."/>
            <person name="Presecan E."/>
            <person name="Pujic P."/>
            <person name="Purnelle B."/>
            <person name="Rapoport G."/>
            <person name="Rey M."/>
            <person name="Reynolds S."/>
            <person name="Rieger M."/>
            <person name="Rivolta C."/>
            <person name="Rocha E."/>
            <person name="Roche B."/>
            <person name="Rose M."/>
            <person name="Sadaie Y."/>
            <person name="Sato T."/>
            <person name="Scanlan E."/>
            <person name="Schleich S."/>
            <person name="Schroeter R."/>
            <person name="Scoffone F."/>
            <person name="Sekiguchi J."/>
            <person name="Sekowska A."/>
            <person name="Seror S.J."/>
            <person name="Serror P."/>
            <person name="Shin B.-S."/>
            <person name="Soldo B."/>
            <person name="Sorokin A."/>
            <person name="Tacconi E."/>
            <person name="Takagi T."/>
            <person name="Takahashi H."/>
            <person name="Takemaru K."/>
            <person name="Takeuchi M."/>
            <person name="Tamakoshi A."/>
            <person name="Tanaka T."/>
            <person name="Terpstra P."/>
            <person name="Tognoni A."/>
            <person name="Tosato V."/>
            <person name="Uchiyama S."/>
            <person name="Vandenbol M."/>
            <person name="Vannier F."/>
            <person name="Vassarotti A."/>
            <person name="Viari A."/>
            <person name="Wambutt R."/>
            <person name="Wedler E."/>
            <person name="Wedler H."/>
            <person name="Weitzenegger T."/>
            <person name="Winters P."/>
            <person name="Wipat A."/>
            <person name="Yamamoto H."/>
            <person name="Yamane K."/>
            <person name="Yasumoto K."/>
            <person name="Yata K."/>
            <person name="Yoshida K."/>
            <person name="Yoshikawa H.-F."/>
            <person name="Zumstein E."/>
            <person name="Yoshikawa H."/>
            <person name="Danchin A."/>
        </authorList>
    </citation>
    <scope>NUCLEOTIDE SEQUENCE [LARGE SCALE GENOMIC DNA]</scope>
    <source>
        <strain>168</strain>
    </source>
</reference>
<reference key="3">
    <citation type="journal article" date="1998" name="Biosci. Biotechnol. Biochem.">
        <title>Purification and characterization of NfrA1, a Bacillus subtilis nitro/flavin reductase capable of interacting with the bacterial luciferase.</title>
        <authorList>
            <person name="Zenno S."/>
            <person name="Kobori T."/>
            <person name="Tanokura M."/>
            <person name="Saigo K."/>
        </authorList>
    </citation>
    <scope>FUNCTION</scope>
    <scope>CATALYTIC ACTIVITY</scope>
    <scope>SUBUNIT</scope>
    <scope>BIOPHYSICOCHEMICAL PROPERTIES</scope>
    <scope>REACTION MECHANISM</scope>
    <scope>SUBSTRATE SPECIFICITY</scope>
    <scope>NOMENCLATURE</scope>
</reference>
<feature type="chain" id="PRO_0000205512" description="FMN reductase (NADPH)">
    <location>
        <begin position="1"/>
        <end position="249"/>
    </location>
</feature>
<feature type="helix" evidence="4">
    <location>
        <begin position="3"/>
        <end position="9"/>
    </location>
</feature>
<feature type="helix" evidence="4">
    <location>
        <begin position="24"/>
        <end position="35"/>
    </location>
</feature>
<feature type="helix" evidence="4">
    <location>
        <begin position="40"/>
        <end position="42"/>
    </location>
</feature>
<feature type="strand" evidence="4">
    <location>
        <begin position="46"/>
        <end position="51"/>
    </location>
</feature>
<feature type="helix" evidence="4">
    <location>
        <begin position="54"/>
        <end position="63"/>
    </location>
</feature>
<feature type="helix" evidence="4">
    <location>
        <begin position="68"/>
        <end position="70"/>
    </location>
</feature>
<feature type="strand" evidence="4">
    <location>
        <begin position="72"/>
        <end position="82"/>
    </location>
</feature>
<feature type="helix" evidence="4">
    <location>
        <begin position="84"/>
        <end position="92"/>
    </location>
</feature>
<feature type="helix" evidence="4">
    <location>
        <begin position="98"/>
        <end position="101"/>
    </location>
</feature>
<feature type="helix" evidence="4">
    <location>
        <begin position="104"/>
        <end position="127"/>
    </location>
</feature>
<feature type="strand" evidence="4">
    <location>
        <begin position="131"/>
        <end position="135"/>
    </location>
</feature>
<feature type="helix" evidence="4">
    <location>
        <begin position="136"/>
        <end position="141"/>
    </location>
</feature>
<feature type="helix" evidence="4">
    <location>
        <begin position="142"/>
        <end position="149"/>
    </location>
</feature>
<feature type="strand" evidence="4">
    <location>
        <begin position="155"/>
        <end position="164"/>
    </location>
</feature>
<feature type="helix" evidence="4">
    <location>
        <begin position="178"/>
        <end position="181"/>
    </location>
</feature>
<feature type="strand" evidence="4">
    <location>
        <begin position="182"/>
        <end position="186"/>
    </location>
</feature>
<feature type="helix" evidence="4">
    <location>
        <begin position="191"/>
        <end position="213"/>
    </location>
</feature>
<feature type="helix" evidence="4">
    <location>
        <begin position="221"/>
        <end position="229"/>
    </location>
</feature>
<feature type="strand" evidence="4">
    <location>
        <begin position="230"/>
        <end position="232"/>
    </location>
</feature>
<feature type="helix" evidence="4">
    <location>
        <begin position="237"/>
        <end position="243"/>
    </location>
</feature>
<proteinExistence type="evidence at protein level"/>